<keyword id="KW-0479">Metal-binding</keyword>
<keyword id="KW-0521">NADP</keyword>
<keyword id="KW-0560">Oxidoreductase</keyword>
<keyword id="KW-0630">Potassium</keyword>
<evidence type="ECO:0000255" key="1">
    <source>
        <dbReference type="HAMAP-Rule" id="MF_00596"/>
    </source>
</evidence>
<feature type="chain" id="PRO_1000025625" description="GMP reductase">
    <location>
        <begin position="1"/>
        <end position="347"/>
    </location>
</feature>
<feature type="active site" description="Thioimidate intermediate" evidence="1">
    <location>
        <position position="186"/>
    </location>
</feature>
<feature type="binding site" evidence="1">
    <location>
        <begin position="108"/>
        <end position="131"/>
    </location>
    <ligand>
        <name>NADP(+)</name>
        <dbReference type="ChEBI" id="CHEBI:58349"/>
    </ligand>
</feature>
<feature type="binding site" evidence="1">
    <location>
        <position position="181"/>
    </location>
    <ligand>
        <name>K(+)</name>
        <dbReference type="ChEBI" id="CHEBI:29103"/>
    </ligand>
</feature>
<feature type="binding site" evidence="1">
    <location>
        <position position="183"/>
    </location>
    <ligand>
        <name>K(+)</name>
        <dbReference type="ChEBI" id="CHEBI:29103"/>
    </ligand>
</feature>
<feature type="binding site" evidence="1">
    <location>
        <begin position="216"/>
        <end position="239"/>
    </location>
    <ligand>
        <name>NADP(+)</name>
        <dbReference type="ChEBI" id="CHEBI:58349"/>
    </ligand>
</feature>
<reference key="1">
    <citation type="journal article" date="2006" name="J. Bacteriol.">
        <title>Complete genome sequence of Yersinia pestis strains Antiqua and Nepal516: evidence of gene reduction in an emerging pathogen.</title>
        <authorList>
            <person name="Chain P.S.G."/>
            <person name="Hu P."/>
            <person name="Malfatti S.A."/>
            <person name="Radnedge L."/>
            <person name="Larimer F."/>
            <person name="Vergez L.M."/>
            <person name="Worsham P."/>
            <person name="Chu M.C."/>
            <person name="Andersen G.L."/>
        </authorList>
    </citation>
    <scope>NUCLEOTIDE SEQUENCE [LARGE SCALE GENOMIC DNA]</scope>
    <source>
        <strain>Antiqua</strain>
    </source>
</reference>
<accession>Q1C3T0</accession>
<proteinExistence type="inferred from homology"/>
<comment type="function">
    <text evidence="1">Catalyzes the irreversible NADPH-dependent deamination of GMP to IMP. It functions in the conversion of nucleobase, nucleoside and nucleotide derivatives of G to A nucleotides, and in maintaining the intracellular balance of A and G nucleotides.</text>
</comment>
<comment type="catalytic activity">
    <reaction evidence="1">
        <text>IMP + NH4(+) + NADP(+) = GMP + NADPH + 2 H(+)</text>
        <dbReference type="Rhea" id="RHEA:17185"/>
        <dbReference type="ChEBI" id="CHEBI:15378"/>
        <dbReference type="ChEBI" id="CHEBI:28938"/>
        <dbReference type="ChEBI" id="CHEBI:57783"/>
        <dbReference type="ChEBI" id="CHEBI:58053"/>
        <dbReference type="ChEBI" id="CHEBI:58115"/>
        <dbReference type="ChEBI" id="CHEBI:58349"/>
        <dbReference type="EC" id="1.7.1.7"/>
    </reaction>
</comment>
<comment type="subunit">
    <text evidence="1">Homotetramer.</text>
</comment>
<comment type="similarity">
    <text evidence="1">Belongs to the IMPDH/GMPR family. GuaC type 1 subfamily.</text>
</comment>
<protein>
    <recommendedName>
        <fullName evidence="1">GMP reductase</fullName>
        <ecNumber evidence="1">1.7.1.7</ecNumber>
    </recommendedName>
    <alternativeName>
        <fullName evidence="1">Guanosine 5'-monophosphate oxidoreductase</fullName>
        <shortName evidence="1">Guanosine monophosphate reductase</shortName>
    </alternativeName>
</protein>
<name>GUAC_YERPA</name>
<organism>
    <name type="scientific">Yersinia pestis bv. Antiqua (strain Antiqua)</name>
    <dbReference type="NCBI Taxonomy" id="360102"/>
    <lineage>
        <taxon>Bacteria</taxon>
        <taxon>Pseudomonadati</taxon>
        <taxon>Pseudomonadota</taxon>
        <taxon>Gammaproteobacteria</taxon>
        <taxon>Enterobacterales</taxon>
        <taxon>Yersiniaceae</taxon>
        <taxon>Yersinia</taxon>
    </lineage>
</organism>
<dbReference type="EC" id="1.7.1.7" evidence="1"/>
<dbReference type="EMBL" id="CP000308">
    <property type="protein sequence ID" value="ABG14892.1"/>
    <property type="molecule type" value="Genomic_DNA"/>
</dbReference>
<dbReference type="RefSeq" id="WP_002209320.1">
    <property type="nucleotide sequence ID" value="NZ_CP009906.1"/>
</dbReference>
<dbReference type="SMR" id="Q1C3T0"/>
<dbReference type="KEGG" id="ypa:YPA_2930"/>
<dbReference type="Proteomes" id="UP000001971">
    <property type="component" value="Chromosome"/>
</dbReference>
<dbReference type="GO" id="GO:0005829">
    <property type="term" value="C:cytosol"/>
    <property type="evidence" value="ECO:0007669"/>
    <property type="project" value="TreeGrafter"/>
</dbReference>
<dbReference type="GO" id="GO:1902560">
    <property type="term" value="C:GMP reductase complex"/>
    <property type="evidence" value="ECO:0007669"/>
    <property type="project" value="InterPro"/>
</dbReference>
<dbReference type="GO" id="GO:0003920">
    <property type="term" value="F:GMP reductase activity"/>
    <property type="evidence" value="ECO:0007669"/>
    <property type="project" value="UniProtKB-UniRule"/>
</dbReference>
<dbReference type="GO" id="GO:0046872">
    <property type="term" value="F:metal ion binding"/>
    <property type="evidence" value="ECO:0007669"/>
    <property type="project" value="UniProtKB-KW"/>
</dbReference>
<dbReference type="GO" id="GO:0006163">
    <property type="term" value="P:purine nucleotide metabolic process"/>
    <property type="evidence" value="ECO:0007669"/>
    <property type="project" value="UniProtKB-UniRule"/>
</dbReference>
<dbReference type="CDD" id="cd00381">
    <property type="entry name" value="IMPDH"/>
    <property type="match status" value="1"/>
</dbReference>
<dbReference type="FunFam" id="3.20.20.70:FF:000012">
    <property type="entry name" value="GMP reductase"/>
    <property type="match status" value="1"/>
</dbReference>
<dbReference type="Gene3D" id="3.20.20.70">
    <property type="entry name" value="Aldolase class I"/>
    <property type="match status" value="1"/>
</dbReference>
<dbReference type="HAMAP" id="MF_00596">
    <property type="entry name" value="GMP_reduct_type1"/>
    <property type="match status" value="1"/>
</dbReference>
<dbReference type="InterPro" id="IPR013785">
    <property type="entry name" value="Aldolase_TIM"/>
</dbReference>
<dbReference type="InterPro" id="IPR050139">
    <property type="entry name" value="GMP_reductase"/>
</dbReference>
<dbReference type="InterPro" id="IPR005993">
    <property type="entry name" value="GMPR"/>
</dbReference>
<dbReference type="InterPro" id="IPR015875">
    <property type="entry name" value="IMP_DH/GMP_Rdtase_CS"/>
</dbReference>
<dbReference type="InterPro" id="IPR001093">
    <property type="entry name" value="IMP_DH_GMPRt"/>
</dbReference>
<dbReference type="NCBIfam" id="TIGR01305">
    <property type="entry name" value="GMP_reduct_1"/>
    <property type="match status" value="1"/>
</dbReference>
<dbReference type="NCBIfam" id="NF003470">
    <property type="entry name" value="PRK05096.1"/>
    <property type="match status" value="1"/>
</dbReference>
<dbReference type="PANTHER" id="PTHR43170">
    <property type="entry name" value="GMP REDUCTASE"/>
    <property type="match status" value="1"/>
</dbReference>
<dbReference type="PANTHER" id="PTHR43170:SF5">
    <property type="entry name" value="GMP REDUCTASE"/>
    <property type="match status" value="1"/>
</dbReference>
<dbReference type="Pfam" id="PF00478">
    <property type="entry name" value="IMPDH"/>
    <property type="match status" value="1"/>
</dbReference>
<dbReference type="PIRSF" id="PIRSF000235">
    <property type="entry name" value="GMP_reductase"/>
    <property type="match status" value="1"/>
</dbReference>
<dbReference type="SMART" id="SM01240">
    <property type="entry name" value="IMPDH"/>
    <property type="match status" value="1"/>
</dbReference>
<dbReference type="SUPFAM" id="SSF51412">
    <property type="entry name" value="Inosine monophosphate dehydrogenase (IMPDH)"/>
    <property type="match status" value="1"/>
</dbReference>
<dbReference type="PROSITE" id="PS00487">
    <property type="entry name" value="IMP_DH_GMP_RED"/>
    <property type="match status" value="1"/>
</dbReference>
<gene>
    <name evidence="1" type="primary">guaC</name>
    <name type="ordered locus">YPA_2930</name>
</gene>
<sequence length="347" mass="37492">MRIEEGLKLGFKDVLIRPKRSTLKSRSEVALERQFTFKHSGWNWSGVPIIAANMDTVGTFRMAEVLASFDILTAVHKHYTLEQWAEFVKRSPESVLRHVMVSTGTSSADFDKMKQILALSPSLKFICIDVANGYSEHFVSFLQRAREACPDKVICAGNVVTGEMVEELILSGADIVKVGIGPGSVCTTRVKTGVGYPQLSAVIECADAAHGLGGQIVSDGGCSVPGDVAKAFGGGADFVMLGGMLAGHDECEGRVVEENGEKFMLFYGMSSESAMKRHVGGVAQYRAAEGKTVKLPLRGSVDNTVRDIMGGLRSACTYVGASHLKELTKRTTFIRVAEQENRVFGTD</sequence>